<name>PRMA_CUPPJ</name>
<evidence type="ECO:0000255" key="1">
    <source>
        <dbReference type="HAMAP-Rule" id="MF_00735"/>
    </source>
</evidence>
<organism>
    <name type="scientific">Cupriavidus pinatubonensis (strain JMP 134 / LMG 1197)</name>
    <name type="common">Cupriavidus necator (strain JMP 134)</name>
    <dbReference type="NCBI Taxonomy" id="264198"/>
    <lineage>
        <taxon>Bacteria</taxon>
        <taxon>Pseudomonadati</taxon>
        <taxon>Pseudomonadota</taxon>
        <taxon>Betaproteobacteria</taxon>
        <taxon>Burkholderiales</taxon>
        <taxon>Burkholderiaceae</taxon>
        <taxon>Cupriavidus</taxon>
    </lineage>
</organism>
<proteinExistence type="inferred from homology"/>
<reference key="1">
    <citation type="journal article" date="2010" name="PLoS ONE">
        <title>The complete multipartite genome sequence of Cupriavidus necator JMP134, a versatile pollutant degrader.</title>
        <authorList>
            <person name="Lykidis A."/>
            <person name="Perez-Pantoja D."/>
            <person name="Ledger T."/>
            <person name="Mavromatis K."/>
            <person name="Anderson I.J."/>
            <person name="Ivanova N.N."/>
            <person name="Hooper S.D."/>
            <person name="Lapidus A."/>
            <person name="Lucas S."/>
            <person name="Gonzalez B."/>
            <person name="Kyrpides N.C."/>
        </authorList>
    </citation>
    <scope>NUCLEOTIDE SEQUENCE [LARGE SCALE GENOMIC DNA]</scope>
    <source>
        <strain>JMP134 / LMG 1197</strain>
    </source>
</reference>
<gene>
    <name evidence="1" type="primary">prmA</name>
    <name type="ordered locus">Reut_A2867</name>
</gene>
<sequence>MAFQECVIEVAQDQAEAWSDALFDLCALSVSVEDADADTPDEQPLFGEPGLEPTKLAWNRSRVVALFGDDTDPALAVAAASNALGIDPVPAYALREVEDQDWVRLTQSQFEPIRIGERIWVVPSWHDAPEPDAVVLELDPGLAFGTGSHPTTRLCMQWLEQNLKAGETVLDYGCGSGILAIVAKKLGAGDTLGIDIDPNAVEASRYNAERNQVQADFALPESVSEATYDLVVANILSNPLKLMAAMLSARVRAGGRLILSGVLERQAEEVAAAYAPWLPLTVWRSEEGWVCLHGTRP</sequence>
<feature type="chain" id="PRO_1000046076" description="Ribosomal protein L11 methyltransferase">
    <location>
        <begin position="1"/>
        <end position="297"/>
    </location>
</feature>
<feature type="binding site" evidence="1">
    <location>
        <position position="152"/>
    </location>
    <ligand>
        <name>S-adenosyl-L-methionine</name>
        <dbReference type="ChEBI" id="CHEBI:59789"/>
    </ligand>
</feature>
<feature type="binding site" evidence="1">
    <location>
        <position position="173"/>
    </location>
    <ligand>
        <name>S-adenosyl-L-methionine</name>
        <dbReference type="ChEBI" id="CHEBI:59789"/>
    </ligand>
</feature>
<feature type="binding site" evidence="1">
    <location>
        <position position="195"/>
    </location>
    <ligand>
        <name>S-adenosyl-L-methionine</name>
        <dbReference type="ChEBI" id="CHEBI:59789"/>
    </ligand>
</feature>
<feature type="binding site" evidence="1">
    <location>
        <position position="234"/>
    </location>
    <ligand>
        <name>S-adenosyl-L-methionine</name>
        <dbReference type="ChEBI" id="CHEBI:59789"/>
    </ligand>
</feature>
<protein>
    <recommendedName>
        <fullName evidence="1">Ribosomal protein L11 methyltransferase</fullName>
        <shortName evidence="1">L11 Mtase</shortName>
        <ecNumber evidence="1">2.1.1.-</ecNumber>
    </recommendedName>
</protein>
<accession>Q46XA5</accession>
<keyword id="KW-0963">Cytoplasm</keyword>
<keyword id="KW-0489">Methyltransferase</keyword>
<keyword id="KW-0949">S-adenosyl-L-methionine</keyword>
<keyword id="KW-0808">Transferase</keyword>
<dbReference type="EC" id="2.1.1.-" evidence="1"/>
<dbReference type="EMBL" id="CP000090">
    <property type="protein sequence ID" value="AAZ62228.1"/>
    <property type="molecule type" value="Genomic_DNA"/>
</dbReference>
<dbReference type="SMR" id="Q46XA5"/>
<dbReference type="STRING" id="264198.Reut_A2867"/>
<dbReference type="KEGG" id="reu:Reut_A2867"/>
<dbReference type="eggNOG" id="COG2264">
    <property type="taxonomic scope" value="Bacteria"/>
</dbReference>
<dbReference type="HOGENOM" id="CLU_049382_4_1_4"/>
<dbReference type="OrthoDB" id="9785995at2"/>
<dbReference type="GO" id="GO:0005829">
    <property type="term" value="C:cytosol"/>
    <property type="evidence" value="ECO:0007669"/>
    <property type="project" value="TreeGrafter"/>
</dbReference>
<dbReference type="GO" id="GO:0016279">
    <property type="term" value="F:protein-lysine N-methyltransferase activity"/>
    <property type="evidence" value="ECO:0007669"/>
    <property type="project" value="TreeGrafter"/>
</dbReference>
<dbReference type="GO" id="GO:0032259">
    <property type="term" value="P:methylation"/>
    <property type="evidence" value="ECO:0007669"/>
    <property type="project" value="UniProtKB-KW"/>
</dbReference>
<dbReference type="CDD" id="cd02440">
    <property type="entry name" value="AdoMet_MTases"/>
    <property type="match status" value="1"/>
</dbReference>
<dbReference type="Gene3D" id="3.40.50.150">
    <property type="entry name" value="Vaccinia Virus protein VP39"/>
    <property type="match status" value="1"/>
</dbReference>
<dbReference type="HAMAP" id="MF_00735">
    <property type="entry name" value="Methyltr_PrmA"/>
    <property type="match status" value="1"/>
</dbReference>
<dbReference type="InterPro" id="IPR050078">
    <property type="entry name" value="Ribosomal_L11_MeTrfase_PrmA"/>
</dbReference>
<dbReference type="InterPro" id="IPR004498">
    <property type="entry name" value="Ribosomal_PrmA_MeTrfase"/>
</dbReference>
<dbReference type="InterPro" id="IPR029063">
    <property type="entry name" value="SAM-dependent_MTases_sf"/>
</dbReference>
<dbReference type="NCBIfam" id="TIGR00406">
    <property type="entry name" value="prmA"/>
    <property type="match status" value="1"/>
</dbReference>
<dbReference type="PANTHER" id="PTHR43648">
    <property type="entry name" value="ELECTRON TRANSFER FLAVOPROTEIN BETA SUBUNIT LYSINE METHYLTRANSFERASE"/>
    <property type="match status" value="1"/>
</dbReference>
<dbReference type="PANTHER" id="PTHR43648:SF1">
    <property type="entry name" value="ELECTRON TRANSFER FLAVOPROTEIN BETA SUBUNIT LYSINE METHYLTRANSFERASE"/>
    <property type="match status" value="1"/>
</dbReference>
<dbReference type="Pfam" id="PF06325">
    <property type="entry name" value="PrmA"/>
    <property type="match status" value="1"/>
</dbReference>
<dbReference type="PIRSF" id="PIRSF000401">
    <property type="entry name" value="RPL11_MTase"/>
    <property type="match status" value="1"/>
</dbReference>
<dbReference type="SUPFAM" id="SSF53335">
    <property type="entry name" value="S-adenosyl-L-methionine-dependent methyltransferases"/>
    <property type="match status" value="1"/>
</dbReference>
<comment type="function">
    <text evidence="1">Methylates ribosomal protein L11.</text>
</comment>
<comment type="catalytic activity">
    <reaction evidence="1">
        <text>L-lysyl-[protein] + 3 S-adenosyl-L-methionine = N(6),N(6),N(6)-trimethyl-L-lysyl-[protein] + 3 S-adenosyl-L-homocysteine + 3 H(+)</text>
        <dbReference type="Rhea" id="RHEA:54192"/>
        <dbReference type="Rhea" id="RHEA-COMP:9752"/>
        <dbReference type="Rhea" id="RHEA-COMP:13826"/>
        <dbReference type="ChEBI" id="CHEBI:15378"/>
        <dbReference type="ChEBI" id="CHEBI:29969"/>
        <dbReference type="ChEBI" id="CHEBI:57856"/>
        <dbReference type="ChEBI" id="CHEBI:59789"/>
        <dbReference type="ChEBI" id="CHEBI:61961"/>
    </reaction>
</comment>
<comment type="subcellular location">
    <subcellularLocation>
        <location evidence="1">Cytoplasm</location>
    </subcellularLocation>
</comment>
<comment type="similarity">
    <text evidence="1">Belongs to the methyltransferase superfamily. PrmA family.</text>
</comment>